<feature type="initiator methionine" description="Removed">
    <location>
        <position position="1"/>
    </location>
</feature>
<feature type="chain" id="PRO_0000099828" description="Light-harvesting protein B-800/850 beta 2 chain">
    <location>
        <begin position="2"/>
        <end position="46"/>
    </location>
</feature>
<feature type="topological domain" description="Cytoplasmic" evidence="1">
    <location>
        <begin position="2"/>
        <end position="25"/>
    </location>
</feature>
<feature type="transmembrane region" description="Helical" evidence="1">
    <location>
        <begin position="26"/>
        <end position="46"/>
    </location>
</feature>
<feature type="binding site" description="axial binding residue">
    <location>
        <position position="18"/>
    </location>
    <ligand>
        <name>a bacteriochlorophyll</name>
        <dbReference type="ChEBI" id="CHEBI:38201"/>
    </ligand>
    <ligandPart>
        <name>Mg</name>
        <dbReference type="ChEBI" id="CHEBI:25107"/>
    </ligandPart>
</feature>
<feature type="binding site" description="axial binding residue">
    <location>
        <position position="36"/>
    </location>
    <ligand>
        <name>a bacteriochlorophyll</name>
        <dbReference type="ChEBI" id="CHEBI:38201"/>
    </ligand>
    <ligandPart>
        <name>Mg</name>
        <dbReference type="ChEBI" id="CHEBI:25107"/>
    </ligandPart>
</feature>
<organism>
    <name type="scientific">Magnetospirillum molischianum</name>
    <name type="common">Rhodospirillum molischianum</name>
    <dbReference type="NCBI Taxonomy" id="1083"/>
    <lineage>
        <taxon>Bacteria</taxon>
        <taxon>Pseudomonadati</taxon>
        <taxon>Pseudomonadota</taxon>
        <taxon>Alphaproteobacteria</taxon>
        <taxon>Rhodospirillales</taxon>
        <taxon>Rhodospirillaceae</taxon>
        <taxon>Magnetospirillum</taxon>
    </lineage>
</organism>
<reference key="1">
    <citation type="journal article" date="1996" name="Biochim. Biophys. Acta">
        <title>Molecular cloning, DNA sequence and transcriptional analysis of the Rhodospirillum molischianum B800/850 light-harvesting genes.</title>
        <authorList>
            <person name="Germeroth L."/>
            <person name="Reilaender H."/>
            <person name="Michel H."/>
        </authorList>
    </citation>
    <scope>NUCLEOTIDE SEQUENCE [GENOMIC DNA]</scope>
    <scope>PROTEIN SEQUENCE OF N-TERMINUS</scope>
    <source>
        <strain>DSM 119 / LMG 4353 / Pfennig 3660</strain>
    </source>
</reference>
<accession>P95674</accession>
<gene>
    <name type="primary">B2</name>
</gene>
<comment type="function">
    <text>Antenna complexes are light-harvesting systems, which transfer the excitation energy to the reaction centers.</text>
</comment>
<comment type="subunit">
    <text>The core complex is formed by different alpha and beta chains, binding bacteriochlorophyll molecules, and arranged most probably in tetrameric structures disposed around the reaction center.</text>
</comment>
<comment type="subcellular location">
    <subcellularLocation>
        <location>Cell inner membrane</location>
        <topology>Single-pass type II membrane protein</topology>
    </subcellularLocation>
</comment>
<comment type="similarity">
    <text evidence="2">Belongs to the antenna complex beta subunit family.</text>
</comment>
<evidence type="ECO:0000255" key="1"/>
<evidence type="ECO:0000305" key="2"/>
<sequence length="46" mass="5175">MAERSLSGLTEEEAVAVHAQFQTTFSAFIVLAAVAHVLVWVWKPWF</sequence>
<protein>
    <recommendedName>
        <fullName>Light-harvesting protein B-800/850 beta 2 chain</fullName>
    </recommendedName>
    <alternativeName>
        <fullName>Antenna pigment protein beta 2 chain</fullName>
    </alternativeName>
</protein>
<keyword id="KW-0042">Antenna complex</keyword>
<keyword id="KW-0076">Bacteriochlorophyll</keyword>
<keyword id="KW-0997">Cell inner membrane</keyword>
<keyword id="KW-1003">Cell membrane</keyword>
<keyword id="KW-0148">Chlorophyll</keyword>
<keyword id="KW-0157">Chromophore</keyword>
<keyword id="KW-0903">Direct protein sequencing</keyword>
<keyword id="KW-0437">Light-harvesting polypeptide</keyword>
<keyword id="KW-0460">Magnesium</keyword>
<keyword id="KW-0472">Membrane</keyword>
<keyword id="KW-0479">Metal-binding</keyword>
<keyword id="KW-0812">Transmembrane</keyword>
<keyword id="KW-1133">Transmembrane helix</keyword>
<name>LHB2_MAGML</name>
<dbReference type="EMBL" id="S82431">
    <property type="protein sequence ID" value="AAB46771.1"/>
    <property type="molecule type" value="Genomic_DNA"/>
</dbReference>
<dbReference type="SMR" id="P95674"/>
<dbReference type="GO" id="GO:0005886">
    <property type="term" value="C:plasma membrane"/>
    <property type="evidence" value="ECO:0007669"/>
    <property type="project" value="UniProtKB-SubCell"/>
</dbReference>
<dbReference type="GO" id="GO:0030077">
    <property type="term" value="C:plasma membrane light-harvesting complex"/>
    <property type="evidence" value="ECO:0007669"/>
    <property type="project" value="InterPro"/>
</dbReference>
<dbReference type="GO" id="GO:0042314">
    <property type="term" value="F:bacteriochlorophyll binding"/>
    <property type="evidence" value="ECO:0007669"/>
    <property type="project" value="UniProtKB-KW"/>
</dbReference>
<dbReference type="GO" id="GO:0045156">
    <property type="term" value="F:electron transporter, transferring electrons within the cyclic electron transport pathway of photosynthesis activity"/>
    <property type="evidence" value="ECO:0007669"/>
    <property type="project" value="InterPro"/>
</dbReference>
<dbReference type="GO" id="GO:0046872">
    <property type="term" value="F:metal ion binding"/>
    <property type="evidence" value="ECO:0007669"/>
    <property type="project" value="UniProtKB-KW"/>
</dbReference>
<dbReference type="GO" id="GO:0019684">
    <property type="term" value="P:photosynthesis, light reaction"/>
    <property type="evidence" value="ECO:0007669"/>
    <property type="project" value="InterPro"/>
</dbReference>
<dbReference type="Gene3D" id="1.20.5.250">
    <property type="match status" value="1"/>
</dbReference>
<dbReference type="InterPro" id="IPR000066">
    <property type="entry name" value="Antenna_a/b"/>
</dbReference>
<dbReference type="InterPro" id="IPR023623">
    <property type="entry name" value="Antenna_beta_CS"/>
</dbReference>
<dbReference type="InterPro" id="IPR023624">
    <property type="entry name" value="Antenna_beta_dom_sf"/>
</dbReference>
<dbReference type="InterPro" id="IPR002362">
    <property type="entry name" value="LHB-1/5"/>
</dbReference>
<dbReference type="InterPro" id="IPR035889">
    <property type="entry name" value="Light-harvesting_complex"/>
</dbReference>
<dbReference type="NCBIfam" id="NF040862">
    <property type="entry name" value="pufB_517_ASD"/>
    <property type="match status" value="1"/>
</dbReference>
<dbReference type="Pfam" id="PF00556">
    <property type="entry name" value="LHC"/>
    <property type="match status" value="1"/>
</dbReference>
<dbReference type="PIRSF" id="PIRSF002900">
    <property type="entry name" value="Antenna_beta"/>
    <property type="match status" value="1"/>
</dbReference>
<dbReference type="PRINTS" id="PR00674">
    <property type="entry name" value="LIGHTHARVSTB"/>
</dbReference>
<dbReference type="SUPFAM" id="SSF56918">
    <property type="entry name" value="Light-harvesting complex subunits"/>
    <property type="match status" value="1"/>
</dbReference>
<dbReference type="PROSITE" id="PS00969">
    <property type="entry name" value="ANTENNA_COMP_BETA"/>
    <property type="match status" value="1"/>
</dbReference>
<proteinExistence type="evidence at protein level"/>